<gene>
    <name type="ordered locus">AF_0554</name>
</gene>
<feature type="chain" id="PRO_0000159077" description="Putative sulfur carrier protein AF_0554">
    <location>
        <begin position="1"/>
        <end position="88"/>
    </location>
</feature>
<feature type="active site" description="Cysteine persulfide intermediate" evidence="1">
    <location>
        <position position="26"/>
    </location>
</feature>
<protein>
    <recommendedName>
        <fullName>Putative sulfur carrier protein AF_0554</fullName>
    </recommendedName>
</protein>
<sequence>MITMSRRAESRQIEANEVLDIRGEVCPFTFIETKLKLEEMKSGEILRVIIDHEPAVRDVPRSVEQEGHEVLSVEKVGEKEWSILIKKK</sequence>
<evidence type="ECO:0000250" key="1">
    <source>
        <dbReference type="UniProtKB" id="P0A890"/>
    </source>
</evidence>
<evidence type="ECO:0000305" key="2"/>
<name>Y554_ARCFU</name>
<keyword id="KW-1185">Reference proteome</keyword>
<accession>O29697</accession>
<comment type="similarity">
    <text evidence="2">Belongs to the sulfur carrier protein TusA family.</text>
</comment>
<organism>
    <name type="scientific">Archaeoglobus fulgidus (strain ATCC 49558 / DSM 4304 / JCM 9628 / NBRC 100126 / VC-16)</name>
    <dbReference type="NCBI Taxonomy" id="224325"/>
    <lineage>
        <taxon>Archaea</taxon>
        <taxon>Methanobacteriati</taxon>
        <taxon>Methanobacteriota</taxon>
        <taxon>Archaeoglobi</taxon>
        <taxon>Archaeoglobales</taxon>
        <taxon>Archaeoglobaceae</taxon>
        <taxon>Archaeoglobus</taxon>
    </lineage>
</organism>
<proteinExistence type="inferred from homology"/>
<reference key="1">
    <citation type="journal article" date="1997" name="Nature">
        <title>The complete genome sequence of the hyperthermophilic, sulphate-reducing archaeon Archaeoglobus fulgidus.</title>
        <authorList>
            <person name="Klenk H.-P."/>
            <person name="Clayton R.A."/>
            <person name="Tomb J.-F."/>
            <person name="White O."/>
            <person name="Nelson K.E."/>
            <person name="Ketchum K.A."/>
            <person name="Dodson R.J."/>
            <person name="Gwinn M.L."/>
            <person name="Hickey E.K."/>
            <person name="Peterson J.D."/>
            <person name="Richardson D.L."/>
            <person name="Kerlavage A.R."/>
            <person name="Graham D.E."/>
            <person name="Kyrpides N.C."/>
            <person name="Fleischmann R.D."/>
            <person name="Quackenbush J."/>
            <person name="Lee N.H."/>
            <person name="Sutton G.G."/>
            <person name="Gill S.R."/>
            <person name="Kirkness E.F."/>
            <person name="Dougherty B.A."/>
            <person name="McKenney K."/>
            <person name="Adams M.D."/>
            <person name="Loftus B.J."/>
            <person name="Peterson S.N."/>
            <person name="Reich C.I."/>
            <person name="McNeil L.K."/>
            <person name="Badger J.H."/>
            <person name="Glodek A."/>
            <person name="Zhou L."/>
            <person name="Overbeek R."/>
            <person name="Gocayne J.D."/>
            <person name="Weidman J.F."/>
            <person name="McDonald L.A."/>
            <person name="Utterback T.R."/>
            <person name="Cotton M.D."/>
            <person name="Spriggs T."/>
            <person name="Artiach P."/>
            <person name="Kaine B.P."/>
            <person name="Sykes S.M."/>
            <person name="Sadow P.W."/>
            <person name="D'Andrea K.P."/>
            <person name="Bowman C."/>
            <person name="Fujii C."/>
            <person name="Garland S.A."/>
            <person name="Mason T.M."/>
            <person name="Olsen G.J."/>
            <person name="Fraser C.M."/>
            <person name="Smith H.O."/>
            <person name="Woese C.R."/>
            <person name="Venter J.C."/>
        </authorList>
    </citation>
    <scope>NUCLEOTIDE SEQUENCE [LARGE SCALE GENOMIC DNA]</scope>
    <source>
        <strain>ATCC 49558 / DSM 4304 / JCM 9628 / NBRC 100126 / VC-16</strain>
    </source>
</reference>
<dbReference type="EMBL" id="AE000782">
    <property type="protein sequence ID" value="AAB90690.1"/>
    <property type="molecule type" value="Genomic_DNA"/>
</dbReference>
<dbReference type="PIR" id="B69319">
    <property type="entry name" value="B69319"/>
</dbReference>
<dbReference type="SMR" id="O29697"/>
<dbReference type="STRING" id="224325.AF_0554"/>
<dbReference type="PaxDb" id="224325-AF_0554"/>
<dbReference type="EnsemblBacteria" id="AAB90690">
    <property type="protein sequence ID" value="AAB90690"/>
    <property type="gene ID" value="AF_0554"/>
</dbReference>
<dbReference type="KEGG" id="afu:AF_0554"/>
<dbReference type="eggNOG" id="arCOG02062">
    <property type="taxonomic scope" value="Archaea"/>
</dbReference>
<dbReference type="HOGENOM" id="CLU_165255_0_0_2"/>
<dbReference type="OrthoDB" id="45650at2157"/>
<dbReference type="PhylomeDB" id="O29697"/>
<dbReference type="Proteomes" id="UP000002199">
    <property type="component" value="Chromosome"/>
</dbReference>
<dbReference type="CDD" id="cd00291">
    <property type="entry name" value="SirA_YedF_YeeD"/>
    <property type="match status" value="1"/>
</dbReference>
<dbReference type="Gene3D" id="3.30.110.40">
    <property type="entry name" value="TusA-like domain"/>
    <property type="match status" value="1"/>
</dbReference>
<dbReference type="InterPro" id="IPR001455">
    <property type="entry name" value="TusA-like"/>
</dbReference>
<dbReference type="InterPro" id="IPR036868">
    <property type="entry name" value="TusA-like_sf"/>
</dbReference>
<dbReference type="PANTHER" id="PTHR33279">
    <property type="entry name" value="SULFUR CARRIER PROTEIN YEDF-RELATED"/>
    <property type="match status" value="1"/>
</dbReference>
<dbReference type="PANTHER" id="PTHR33279:SF6">
    <property type="entry name" value="SULFUR CARRIER PROTEIN YEDF-RELATED"/>
    <property type="match status" value="1"/>
</dbReference>
<dbReference type="Pfam" id="PF01206">
    <property type="entry name" value="TusA"/>
    <property type="match status" value="1"/>
</dbReference>
<dbReference type="SUPFAM" id="SSF64307">
    <property type="entry name" value="SirA-like"/>
    <property type="match status" value="1"/>
</dbReference>
<dbReference type="PROSITE" id="PS01148">
    <property type="entry name" value="UPF0033"/>
    <property type="match status" value="1"/>
</dbReference>